<sequence>MVDMDRISISLPTNLLAEFDEIIEERGYASRSEAIRDSIRDYLIKHKWIHSLEGDRAGTISIIYDHHSTDVMEKLTNIQHDYEKLIVATIHMHLDHDHCMEVVLVKGDASDIKELTDKLTSQKGVKQVKLTVMVPGGNIPQ</sequence>
<reference key="1">
    <citation type="submission" date="2007-10" db="EMBL/GenBank/DDBJ databases">
        <title>Complete sequence of Methanococcus maripaludis C6.</title>
        <authorList>
            <consortium name="US DOE Joint Genome Institute"/>
            <person name="Copeland A."/>
            <person name="Lucas S."/>
            <person name="Lapidus A."/>
            <person name="Barry K."/>
            <person name="Glavina del Rio T."/>
            <person name="Dalin E."/>
            <person name="Tice H."/>
            <person name="Pitluck S."/>
            <person name="Clum A."/>
            <person name="Schmutz J."/>
            <person name="Larimer F."/>
            <person name="Land M."/>
            <person name="Hauser L."/>
            <person name="Kyrpides N."/>
            <person name="Mikhailova N."/>
            <person name="Sieprawska-Lupa M."/>
            <person name="Whitman W.B."/>
            <person name="Richardson P."/>
        </authorList>
    </citation>
    <scope>NUCLEOTIDE SEQUENCE [LARGE SCALE GENOMIC DNA]</scope>
    <source>
        <strain>C6 / ATCC BAA-1332</strain>
    </source>
</reference>
<proteinExistence type="inferred from homology"/>
<evidence type="ECO:0000255" key="1">
    <source>
        <dbReference type="HAMAP-Rule" id="MF_00476"/>
    </source>
</evidence>
<comment type="function">
    <text evidence="1">Transcriptional regulator.</text>
</comment>
<comment type="cofactor">
    <cofactor evidence="1">
        <name>Ni(2+)</name>
        <dbReference type="ChEBI" id="CHEBI:49786"/>
    </cofactor>
    <text evidence="1">Binds 1 nickel ion per subunit.</text>
</comment>
<comment type="similarity">
    <text evidence="1">Belongs to the transcriptional regulatory CopG/NikR family.</text>
</comment>
<feature type="chain" id="PRO_1000125833" description="Putative nickel-responsive regulator">
    <location>
        <begin position="1"/>
        <end position="141"/>
    </location>
</feature>
<feature type="binding site" evidence="1">
    <location>
        <position position="80"/>
    </location>
    <ligand>
        <name>Ni(2+)</name>
        <dbReference type="ChEBI" id="CHEBI:49786"/>
    </ligand>
</feature>
<feature type="binding site" evidence="1">
    <location>
        <position position="91"/>
    </location>
    <ligand>
        <name>Ni(2+)</name>
        <dbReference type="ChEBI" id="CHEBI:49786"/>
    </ligand>
</feature>
<feature type="binding site" evidence="1">
    <location>
        <position position="93"/>
    </location>
    <ligand>
        <name>Ni(2+)</name>
        <dbReference type="ChEBI" id="CHEBI:49786"/>
    </ligand>
</feature>
<feature type="binding site" evidence="1">
    <location>
        <position position="99"/>
    </location>
    <ligand>
        <name>Ni(2+)</name>
        <dbReference type="ChEBI" id="CHEBI:49786"/>
    </ligand>
</feature>
<protein>
    <recommendedName>
        <fullName evidence="1">Putative nickel-responsive regulator</fullName>
    </recommendedName>
</protein>
<organism>
    <name type="scientific">Methanococcus maripaludis (strain C6 / ATCC BAA-1332)</name>
    <dbReference type="NCBI Taxonomy" id="444158"/>
    <lineage>
        <taxon>Archaea</taxon>
        <taxon>Methanobacteriati</taxon>
        <taxon>Methanobacteriota</taxon>
        <taxon>Methanomada group</taxon>
        <taxon>Methanococci</taxon>
        <taxon>Methanococcales</taxon>
        <taxon>Methanococcaceae</taxon>
        <taxon>Methanococcus</taxon>
    </lineage>
</organism>
<dbReference type="EMBL" id="CP000867">
    <property type="protein sequence ID" value="ABX01744.1"/>
    <property type="molecule type" value="Genomic_DNA"/>
</dbReference>
<dbReference type="SMR" id="A9A8S1"/>
<dbReference type="STRING" id="444158.MmarC6_0929"/>
<dbReference type="KEGG" id="mmx:MmarC6_0929"/>
<dbReference type="eggNOG" id="arCOG01008">
    <property type="taxonomic scope" value="Archaea"/>
</dbReference>
<dbReference type="HOGENOM" id="CLU_113319_1_2_2"/>
<dbReference type="OrthoDB" id="25654at2157"/>
<dbReference type="PhylomeDB" id="A9A8S1"/>
<dbReference type="GO" id="GO:0003677">
    <property type="term" value="F:DNA binding"/>
    <property type="evidence" value="ECO:0007669"/>
    <property type="project" value="UniProtKB-KW"/>
</dbReference>
<dbReference type="GO" id="GO:0003700">
    <property type="term" value="F:DNA-binding transcription factor activity"/>
    <property type="evidence" value="ECO:0007669"/>
    <property type="project" value="UniProtKB-UniRule"/>
</dbReference>
<dbReference type="GO" id="GO:0016151">
    <property type="term" value="F:nickel cation binding"/>
    <property type="evidence" value="ECO:0007669"/>
    <property type="project" value="UniProtKB-UniRule"/>
</dbReference>
<dbReference type="GO" id="GO:0010045">
    <property type="term" value="P:response to nickel cation"/>
    <property type="evidence" value="ECO:0007669"/>
    <property type="project" value="InterPro"/>
</dbReference>
<dbReference type="CDD" id="cd22231">
    <property type="entry name" value="RHH_NikR_HicB-like"/>
    <property type="match status" value="1"/>
</dbReference>
<dbReference type="Gene3D" id="3.30.70.1150">
    <property type="entry name" value="ACT-like. Chain A, domain 2"/>
    <property type="match status" value="1"/>
</dbReference>
<dbReference type="Gene3D" id="1.10.1220.10">
    <property type="entry name" value="Met repressor-like"/>
    <property type="match status" value="1"/>
</dbReference>
<dbReference type="HAMAP" id="MF_00476">
    <property type="entry name" value="NikR"/>
    <property type="match status" value="1"/>
</dbReference>
<dbReference type="InterPro" id="IPR027271">
    <property type="entry name" value="Acetolactate_synth/TF_NikR_C"/>
</dbReference>
<dbReference type="InterPro" id="IPR045865">
    <property type="entry name" value="ACT-like_dom_sf"/>
</dbReference>
<dbReference type="InterPro" id="IPR013321">
    <property type="entry name" value="Arc_rbn_hlx_hlx"/>
</dbReference>
<dbReference type="InterPro" id="IPR002145">
    <property type="entry name" value="CopG"/>
</dbReference>
<dbReference type="InterPro" id="IPR050192">
    <property type="entry name" value="CopG/NikR_regulator"/>
</dbReference>
<dbReference type="InterPro" id="IPR022988">
    <property type="entry name" value="Ni_resp_reg_NikR"/>
</dbReference>
<dbReference type="InterPro" id="IPR010985">
    <property type="entry name" value="Ribbon_hlx_hlx"/>
</dbReference>
<dbReference type="InterPro" id="IPR014864">
    <property type="entry name" value="TF_NikR_Ni-bd_C"/>
</dbReference>
<dbReference type="NCBIfam" id="NF001884">
    <property type="entry name" value="PRK00630.1"/>
    <property type="match status" value="1"/>
</dbReference>
<dbReference type="NCBIfam" id="NF002169">
    <property type="entry name" value="PRK01002.1"/>
    <property type="match status" value="1"/>
</dbReference>
<dbReference type="NCBIfam" id="NF002815">
    <property type="entry name" value="PRK02967.1"/>
    <property type="match status" value="1"/>
</dbReference>
<dbReference type="NCBIfam" id="NF003381">
    <property type="entry name" value="PRK04460.1"/>
    <property type="match status" value="1"/>
</dbReference>
<dbReference type="PANTHER" id="PTHR34719">
    <property type="entry name" value="NICKEL-RESPONSIVE REGULATOR"/>
    <property type="match status" value="1"/>
</dbReference>
<dbReference type="PANTHER" id="PTHR34719:SF2">
    <property type="entry name" value="NICKEL-RESPONSIVE REGULATOR"/>
    <property type="match status" value="1"/>
</dbReference>
<dbReference type="Pfam" id="PF08753">
    <property type="entry name" value="NikR_C"/>
    <property type="match status" value="1"/>
</dbReference>
<dbReference type="Pfam" id="PF01402">
    <property type="entry name" value="RHH_1"/>
    <property type="match status" value="1"/>
</dbReference>
<dbReference type="SUPFAM" id="SSF55021">
    <property type="entry name" value="ACT-like"/>
    <property type="match status" value="1"/>
</dbReference>
<dbReference type="SUPFAM" id="SSF47598">
    <property type="entry name" value="Ribbon-helix-helix"/>
    <property type="match status" value="1"/>
</dbReference>
<name>NIKR_METM6</name>
<keyword id="KW-0238">DNA-binding</keyword>
<keyword id="KW-0479">Metal-binding</keyword>
<keyword id="KW-0533">Nickel</keyword>
<keyword id="KW-0804">Transcription</keyword>
<keyword id="KW-0805">Transcription regulation</keyword>
<gene>
    <name type="ordered locus">MmarC6_0929</name>
</gene>
<accession>A9A8S1</accession>